<name>TIG_WOLSU</name>
<comment type="function">
    <text evidence="1">Involved in protein export. Acts as a chaperone by maintaining the newly synthesized protein in an open conformation. Functions as a peptidyl-prolyl cis-trans isomerase.</text>
</comment>
<comment type="catalytic activity">
    <reaction evidence="1">
        <text>[protein]-peptidylproline (omega=180) = [protein]-peptidylproline (omega=0)</text>
        <dbReference type="Rhea" id="RHEA:16237"/>
        <dbReference type="Rhea" id="RHEA-COMP:10747"/>
        <dbReference type="Rhea" id="RHEA-COMP:10748"/>
        <dbReference type="ChEBI" id="CHEBI:83833"/>
        <dbReference type="ChEBI" id="CHEBI:83834"/>
        <dbReference type="EC" id="5.2.1.8"/>
    </reaction>
</comment>
<comment type="subcellular location">
    <subcellularLocation>
        <location>Cytoplasm</location>
    </subcellularLocation>
    <text evidence="1">About half TF is bound to the ribosome near the polypeptide exit tunnel while the other half is free in the cytoplasm.</text>
</comment>
<comment type="domain">
    <text evidence="1">Consists of 3 domains; the N-terminus binds the ribosome, the middle domain has PPIase activity, while the C-terminus has intrinsic chaperone activity on its own.</text>
</comment>
<comment type="similarity">
    <text evidence="1">Belongs to the FKBP-type PPIase family. Tig subfamily.</text>
</comment>
<reference key="1">
    <citation type="journal article" date="2003" name="Proc. Natl. Acad. Sci. U.S.A.">
        <title>Complete genome sequence and analysis of Wolinella succinogenes.</title>
        <authorList>
            <person name="Baar C."/>
            <person name="Eppinger M."/>
            <person name="Raddatz G."/>
            <person name="Simon J."/>
            <person name="Lanz C."/>
            <person name="Klimmek O."/>
            <person name="Nandakumar R."/>
            <person name="Gross R."/>
            <person name="Rosinus A."/>
            <person name="Keller H."/>
            <person name="Jagtap P."/>
            <person name="Linke B."/>
            <person name="Meyer F."/>
            <person name="Lederer H."/>
            <person name="Schuster S.C."/>
        </authorList>
    </citation>
    <scope>NUCLEOTIDE SEQUENCE [LARGE SCALE GENOMIC DNA]</scope>
    <source>
        <strain>ATCC 29543 / DSM 1740 / CCUG 13145 / JCM 31913 / LMG 7466 / NCTC 11488 / FDC 602W</strain>
    </source>
</reference>
<dbReference type="EC" id="5.2.1.8" evidence="1"/>
<dbReference type="EMBL" id="BX571663">
    <property type="protein sequence ID" value="CAE11198.1"/>
    <property type="molecule type" value="Genomic_DNA"/>
</dbReference>
<dbReference type="RefSeq" id="WP_011139980.1">
    <property type="nucleotide sequence ID" value="NC_005090.1"/>
</dbReference>
<dbReference type="SMR" id="Q7M7M4"/>
<dbReference type="STRING" id="273121.WS2209"/>
<dbReference type="KEGG" id="wsu:WS2209"/>
<dbReference type="eggNOG" id="COG0544">
    <property type="taxonomic scope" value="Bacteria"/>
</dbReference>
<dbReference type="HOGENOM" id="CLU_033058_2_2_7"/>
<dbReference type="Proteomes" id="UP000000422">
    <property type="component" value="Chromosome"/>
</dbReference>
<dbReference type="GO" id="GO:0005737">
    <property type="term" value="C:cytoplasm"/>
    <property type="evidence" value="ECO:0007669"/>
    <property type="project" value="UniProtKB-SubCell"/>
</dbReference>
<dbReference type="GO" id="GO:0003755">
    <property type="term" value="F:peptidyl-prolyl cis-trans isomerase activity"/>
    <property type="evidence" value="ECO:0007669"/>
    <property type="project" value="UniProtKB-UniRule"/>
</dbReference>
<dbReference type="GO" id="GO:0051301">
    <property type="term" value="P:cell division"/>
    <property type="evidence" value="ECO:0007669"/>
    <property type="project" value="UniProtKB-KW"/>
</dbReference>
<dbReference type="GO" id="GO:0006457">
    <property type="term" value="P:protein folding"/>
    <property type="evidence" value="ECO:0007669"/>
    <property type="project" value="UniProtKB-UniRule"/>
</dbReference>
<dbReference type="GO" id="GO:0015031">
    <property type="term" value="P:protein transport"/>
    <property type="evidence" value="ECO:0007669"/>
    <property type="project" value="UniProtKB-UniRule"/>
</dbReference>
<dbReference type="FunFam" id="3.10.50.40:FF:000001">
    <property type="entry name" value="Trigger factor"/>
    <property type="match status" value="1"/>
</dbReference>
<dbReference type="Gene3D" id="3.10.50.40">
    <property type="match status" value="1"/>
</dbReference>
<dbReference type="Gene3D" id="3.30.70.1050">
    <property type="entry name" value="Trigger factor ribosome-binding domain"/>
    <property type="match status" value="1"/>
</dbReference>
<dbReference type="Gene3D" id="1.10.3120.10">
    <property type="entry name" value="Trigger factor, C-terminal domain"/>
    <property type="match status" value="1"/>
</dbReference>
<dbReference type="HAMAP" id="MF_00303">
    <property type="entry name" value="Trigger_factor_Tig"/>
    <property type="match status" value="1"/>
</dbReference>
<dbReference type="InterPro" id="IPR046357">
    <property type="entry name" value="PPIase_dom_sf"/>
</dbReference>
<dbReference type="InterPro" id="IPR001179">
    <property type="entry name" value="PPIase_FKBP_dom"/>
</dbReference>
<dbReference type="InterPro" id="IPR005215">
    <property type="entry name" value="Trig_fac"/>
</dbReference>
<dbReference type="InterPro" id="IPR008880">
    <property type="entry name" value="Trigger_fac_C"/>
</dbReference>
<dbReference type="InterPro" id="IPR037041">
    <property type="entry name" value="Trigger_fac_C_sf"/>
</dbReference>
<dbReference type="InterPro" id="IPR008881">
    <property type="entry name" value="Trigger_fac_ribosome-bd_bac"/>
</dbReference>
<dbReference type="InterPro" id="IPR036611">
    <property type="entry name" value="Trigger_fac_ribosome-bd_sf"/>
</dbReference>
<dbReference type="InterPro" id="IPR027304">
    <property type="entry name" value="Trigger_fact/SurA_dom_sf"/>
</dbReference>
<dbReference type="NCBIfam" id="TIGR00115">
    <property type="entry name" value="tig"/>
    <property type="match status" value="1"/>
</dbReference>
<dbReference type="Pfam" id="PF00254">
    <property type="entry name" value="FKBP_C"/>
    <property type="match status" value="1"/>
</dbReference>
<dbReference type="Pfam" id="PF05698">
    <property type="entry name" value="Trigger_C"/>
    <property type="match status" value="1"/>
</dbReference>
<dbReference type="Pfam" id="PF05697">
    <property type="entry name" value="Trigger_N"/>
    <property type="match status" value="1"/>
</dbReference>
<dbReference type="PIRSF" id="PIRSF003095">
    <property type="entry name" value="Trigger_factor"/>
    <property type="match status" value="1"/>
</dbReference>
<dbReference type="SUPFAM" id="SSF54534">
    <property type="entry name" value="FKBP-like"/>
    <property type="match status" value="1"/>
</dbReference>
<dbReference type="SUPFAM" id="SSF109998">
    <property type="entry name" value="Triger factor/SurA peptide-binding domain-like"/>
    <property type="match status" value="1"/>
</dbReference>
<dbReference type="SUPFAM" id="SSF102735">
    <property type="entry name" value="Trigger factor ribosome-binding domain"/>
    <property type="match status" value="1"/>
</dbReference>
<dbReference type="PROSITE" id="PS50059">
    <property type="entry name" value="FKBP_PPIASE"/>
    <property type="match status" value="1"/>
</dbReference>
<proteinExistence type="inferred from homology"/>
<evidence type="ECO:0000255" key="1">
    <source>
        <dbReference type="HAMAP-Rule" id="MF_00303"/>
    </source>
</evidence>
<feature type="chain" id="PRO_0000179463" description="Trigger factor">
    <location>
        <begin position="1"/>
        <end position="432"/>
    </location>
</feature>
<feature type="domain" description="PPIase FKBP-type" evidence="1">
    <location>
        <begin position="165"/>
        <end position="250"/>
    </location>
</feature>
<gene>
    <name evidence="1" type="primary">tig</name>
    <name type="ordered locus">WS2209</name>
</gene>
<keyword id="KW-0131">Cell cycle</keyword>
<keyword id="KW-0132">Cell division</keyword>
<keyword id="KW-0143">Chaperone</keyword>
<keyword id="KW-0963">Cytoplasm</keyword>
<keyword id="KW-0413">Isomerase</keyword>
<keyword id="KW-1185">Reference proteome</keyword>
<keyword id="KW-0697">Rotamase</keyword>
<accession>Q7M7M4</accession>
<sequence>MNLQTQKINSANATAKGTLEKALLEEKLDKLSKDAAKNLKVDGFRKGKVPAGVIKARYGEKLQEDAEREALQELLDAALKDLGAEPSQLIGDPRITEYNKHDNGIDVEVKIGLAPEITLQESLTYVPGFELPSVSEEEINTRLMELAKAKAPLAPAPEGKALENGDFAKIDFEGFLGEEAFEGGKAEDYMLQIGSKSFIPGFEDQLIGMKAGEKRDIQVKFPENYGSEKLAGQEATFKIALKEIQVKAPQEPSDEFAKSVLPEEPEANLNLLKEKIKEQIATEKKVELYNSELKTKLVDNLVEALAFDLPELVVEQEIDLVFRNTLSSLSKEEIEALRNDQEAVKAKREEHRESATRSVKVTFIVDALAKKEGIAVQDNELIQTIYYESMAMGQDPKAMLEYYKNNNLLPAVRMAMLEDKLLTHLLDQKIKG</sequence>
<organism>
    <name type="scientific">Wolinella succinogenes (strain ATCC 29543 / DSM 1740 / CCUG 13145 / JCM 31913 / LMG 7466 / NCTC 11488 / FDC 602W)</name>
    <name type="common">Vibrio succinogenes</name>
    <dbReference type="NCBI Taxonomy" id="273121"/>
    <lineage>
        <taxon>Bacteria</taxon>
        <taxon>Pseudomonadati</taxon>
        <taxon>Campylobacterota</taxon>
        <taxon>Epsilonproteobacteria</taxon>
        <taxon>Campylobacterales</taxon>
        <taxon>Helicobacteraceae</taxon>
        <taxon>Wolinella</taxon>
    </lineage>
</organism>
<protein>
    <recommendedName>
        <fullName evidence="1">Trigger factor</fullName>
        <shortName evidence="1">TF</shortName>
        <ecNumber evidence="1">5.2.1.8</ecNumber>
    </recommendedName>
    <alternativeName>
        <fullName evidence="1">PPIase</fullName>
    </alternativeName>
</protein>